<keyword id="KW-0007">Acetylation</keyword>
<keyword id="KW-0158">Chromosome</keyword>
<keyword id="KW-0238">DNA-binding</keyword>
<keyword id="KW-0488">Methylation</keyword>
<keyword id="KW-0544">Nucleosome core</keyword>
<keyword id="KW-0539">Nucleus</keyword>
<keyword id="KW-0597">Phosphoprotein</keyword>
<organism>
    <name type="scientific">Lolium temulentum</name>
    <name type="common">Darnel rye-grass</name>
    <dbReference type="NCBI Taxonomy" id="34176"/>
    <lineage>
        <taxon>Eukaryota</taxon>
        <taxon>Viridiplantae</taxon>
        <taxon>Streptophyta</taxon>
        <taxon>Embryophyta</taxon>
        <taxon>Tracheophyta</taxon>
        <taxon>Spermatophyta</taxon>
        <taxon>Magnoliopsida</taxon>
        <taxon>Liliopsida</taxon>
        <taxon>Poales</taxon>
        <taxon>Poaceae</taxon>
        <taxon>BOP clade</taxon>
        <taxon>Pooideae</taxon>
        <taxon>Poodae</taxon>
        <taxon>Poeae</taxon>
        <taxon>Poeae Chloroplast Group 2 (Poeae type)</taxon>
        <taxon>Loliodinae</taxon>
        <taxon>Loliinae</taxon>
        <taxon>Lolium</taxon>
    </lineage>
</organism>
<sequence length="136" mass="15406">MARTKQTARKSTGGKAPRKQLATKAARKSAPTTGGVKKPHRYRPGTVALREIRKYQKSTELLIRKLPFQRLVREIAQDFKTDLRFQSHAVLALQEAAEAYLVGLFEDTNLCAIHAKRVTIMPKDIQLARRIRGERA</sequence>
<protein>
    <recommendedName>
        <fullName>Histone H3.3</fullName>
    </recommendedName>
</protein>
<dbReference type="EMBL" id="X79714">
    <property type="protein sequence ID" value="CAA56153.1"/>
    <property type="molecule type" value="mRNA"/>
</dbReference>
<dbReference type="SMR" id="P69245"/>
<dbReference type="GO" id="GO:0000786">
    <property type="term" value="C:nucleosome"/>
    <property type="evidence" value="ECO:0007669"/>
    <property type="project" value="UniProtKB-KW"/>
</dbReference>
<dbReference type="GO" id="GO:0005634">
    <property type="term" value="C:nucleus"/>
    <property type="evidence" value="ECO:0007669"/>
    <property type="project" value="UniProtKB-SubCell"/>
</dbReference>
<dbReference type="GO" id="GO:0003677">
    <property type="term" value="F:DNA binding"/>
    <property type="evidence" value="ECO:0007669"/>
    <property type="project" value="UniProtKB-KW"/>
</dbReference>
<dbReference type="GO" id="GO:0046982">
    <property type="term" value="F:protein heterodimerization activity"/>
    <property type="evidence" value="ECO:0007669"/>
    <property type="project" value="InterPro"/>
</dbReference>
<dbReference type="GO" id="GO:0030527">
    <property type="term" value="F:structural constituent of chromatin"/>
    <property type="evidence" value="ECO:0007669"/>
    <property type="project" value="InterPro"/>
</dbReference>
<dbReference type="CDD" id="cd22911">
    <property type="entry name" value="HFD_H3"/>
    <property type="match status" value="1"/>
</dbReference>
<dbReference type="FunFam" id="1.10.20.10:FF:000078">
    <property type="entry name" value="Histone H3"/>
    <property type="match status" value="1"/>
</dbReference>
<dbReference type="FunFam" id="1.10.20.10:FF:000044">
    <property type="entry name" value="Histone H3.3"/>
    <property type="match status" value="1"/>
</dbReference>
<dbReference type="Gene3D" id="1.10.20.10">
    <property type="entry name" value="Histone, subunit A"/>
    <property type="match status" value="1"/>
</dbReference>
<dbReference type="InterPro" id="IPR009072">
    <property type="entry name" value="Histone-fold"/>
</dbReference>
<dbReference type="InterPro" id="IPR007125">
    <property type="entry name" value="Histone_H2A/H2B/H3"/>
</dbReference>
<dbReference type="InterPro" id="IPR000164">
    <property type="entry name" value="Histone_H3/CENP-A"/>
</dbReference>
<dbReference type="PANTHER" id="PTHR11426">
    <property type="entry name" value="HISTONE H3"/>
    <property type="match status" value="1"/>
</dbReference>
<dbReference type="Pfam" id="PF00125">
    <property type="entry name" value="Histone"/>
    <property type="match status" value="1"/>
</dbReference>
<dbReference type="PRINTS" id="PR00622">
    <property type="entry name" value="HISTONEH3"/>
</dbReference>
<dbReference type="SMART" id="SM00428">
    <property type="entry name" value="H3"/>
    <property type="match status" value="1"/>
</dbReference>
<dbReference type="SUPFAM" id="SSF47113">
    <property type="entry name" value="Histone-fold"/>
    <property type="match status" value="1"/>
</dbReference>
<dbReference type="PROSITE" id="PS00322">
    <property type="entry name" value="HISTONE_H3_1"/>
    <property type="match status" value="1"/>
</dbReference>
<dbReference type="PROSITE" id="PS00959">
    <property type="entry name" value="HISTONE_H3_2"/>
    <property type="match status" value="1"/>
</dbReference>
<feature type="initiator methionine" description="Removed" evidence="1">
    <location>
        <position position="1"/>
    </location>
</feature>
<feature type="chain" id="PRO_0000221280" description="Histone H3.3">
    <location>
        <begin position="2"/>
        <end position="136"/>
    </location>
</feature>
<feature type="region of interest" description="Disordered" evidence="2">
    <location>
        <begin position="1"/>
        <end position="43"/>
    </location>
</feature>
<feature type="modified residue" description="N6-methylated lysine" evidence="1">
    <location>
        <position position="5"/>
    </location>
</feature>
<feature type="modified residue" description="N6-acetyllysine; alternate" evidence="1">
    <location>
        <position position="10"/>
    </location>
</feature>
<feature type="modified residue" description="N6-methylated lysine; alternate" evidence="1">
    <location>
        <position position="10"/>
    </location>
</feature>
<feature type="modified residue" description="Phosphoserine" evidence="1">
    <location>
        <position position="11"/>
    </location>
</feature>
<feature type="modified residue" description="Phosphothreonine" evidence="1">
    <location>
        <position position="12"/>
    </location>
</feature>
<feature type="modified residue" description="N6-acetyllysine" evidence="1">
    <location>
        <position position="15"/>
    </location>
</feature>
<feature type="modified residue" description="N6-acetyllysine; alternate" evidence="1">
    <location>
        <position position="19"/>
    </location>
</feature>
<feature type="modified residue" description="N6-methylated lysine; alternate" evidence="1">
    <location>
        <position position="19"/>
    </location>
</feature>
<feature type="modified residue" description="N6-acetyllysine; alternate" evidence="1">
    <location>
        <position position="24"/>
    </location>
</feature>
<feature type="modified residue" description="N6-methylated lysine; alternate" evidence="1">
    <location>
        <position position="24"/>
    </location>
</feature>
<feature type="modified residue" description="N6-methylated lysine" evidence="1">
    <location>
        <position position="28"/>
    </location>
</feature>
<feature type="modified residue" description="Phosphoserine" evidence="1">
    <location>
        <position position="29"/>
    </location>
</feature>
<feature type="modified residue" description="N6-methylated lysine" evidence="1">
    <location>
        <position position="37"/>
    </location>
</feature>
<accession>P69245</accession>
<accession>P11105</accession>
<evidence type="ECO:0000250" key="1"/>
<evidence type="ECO:0000256" key="2">
    <source>
        <dbReference type="SAM" id="MobiDB-lite"/>
    </source>
</evidence>
<evidence type="ECO:0000305" key="3"/>
<proteinExistence type="evidence at transcript level"/>
<reference key="1">
    <citation type="submission" date="1994-07" db="EMBL/GenBank/DDBJ databases">
        <title>The isolation and characterization of two cDNA clones from Lolium temulentum encoding the histones H3 and H4.</title>
        <authorList>
            <person name="Freeman D.R."/>
            <person name="Ougham H.J."/>
        </authorList>
    </citation>
    <scope>NUCLEOTIDE SEQUENCE [MRNA]</scope>
</reference>
<name>H33_LOLTE</name>
<comment type="function">
    <text>Variant histone H3 which replaces conventional H3 in a wide range of nucleosomes in active genes. Constitutes the predominant form of histone H3 in non-dividing cells and is incorporated into chromatin independently of DNA synthesis. Deposited at sites of nucleosomal displacement throughout transcribed genes, suggesting that it represents an epigenetic imprint of transcriptionally active chromatin. Nucleosomes wrap and compact DNA into chromatin, limiting DNA accessibility to the cellular machineries which require DNA as a template. Histones thereby play a central role in transcription regulation, DNA repair, DNA replication and chromosomal stability. DNA accessibility is regulated via a complex set of post-translational modifications of histones, also called histone code, and nucleosome remodeling.</text>
</comment>
<comment type="subunit">
    <text>The nucleosome is a histone octamer containing two molecules each of H2A, H2B, H3 and H4 assembled in one H3-H4 heterotetramer and two H2A-H2B heterodimers. The octamer wraps approximately 147 bp of DNA.</text>
</comment>
<comment type="subcellular location">
    <subcellularLocation>
        <location evidence="1">Nucleus</location>
    </subcellularLocation>
    <subcellularLocation>
        <location evidence="1">Chromosome</location>
    </subcellularLocation>
</comment>
<comment type="PTM">
    <text evidence="1">Acetylation is generally linked to gene activation. Can be acetylated to form H3K9ac, H3K14ac, H3K18ac and H3K23ac. H3K9ac could compete with H3K9me and prevent gene silencing. H3K9ac is restricted to euchromatin (By similarity).</text>
</comment>
<comment type="PTM">
    <text evidence="1">Methylated to form mainly H3K4me, H3K9me, H3K18me, H3K23me, H3K27me and H3K36me. H3K4me1/2/3, H3K9me3, H3K27me3 and H3K36me1/2/3 are typical marks for euchromatin, whereas heterochromatic chromocenters are enriched in H3K9me1/2 and H3K27me1/2. H2BK143ub1 is probably prerequisite for H3K4me (By similarity).</text>
</comment>
<comment type="PTM">
    <text evidence="1">Can be phosphorylated to form H3S10ph, H3T11ph and H3S28ph.</text>
</comment>
<comment type="similarity">
    <text evidence="3">Belongs to the histone H3 family.</text>
</comment>
<comment type="caution">
    <text evidence="3">To ensure consistency between histone entries, we follow the 'Brno' nomenclature for histone modifications, with positions referring to those used in the literature for the 'closest' model organism. Due to slight variations in histone sequences between organisms and to the presence of initiator methionine in UniProtKB/Swiss-Prot sequences, the actual positions of modified amino acids in the sequence generally differ. In this entry the following conventions are used: H3K4me = methylated Lys-5; H3K9ac = acetylated Lys-10; H3K9me = methylated Lys-10; H3S10ph = phosphorylated Ser-11; H3T11ph = phosphorylated Thr-12; H3K14ac = acetylated Lys-15; H3K18ac = acetylated Lys-19; H3K18me = methylated Lys-19; H3K23ac = acetylated Lys-24; H3K23me = methylated Lys-24; H3K27me = methylated Lys-28; H3S28ph = phosphorylated Ser-29; H3K36me = methylated Lys-37.</text>
</comment>